<comment type="function">
    <text evidence="1">Zinc transporter. Acts as a Zn(2+):proton symporter, which likely mediates zinc ion uptake.</text>
</comment>
<comment type="catalytic activity">
    <reaction evidence="1">
        <text>Zn(2+)(out) + H(+)(out) = Zn(2+)(in) + H(+)(in)</text>
        <dbReference type="Rhea" id="RHEA:71195"/>
        <dbReference type="ChEBI" id="CHEBI:15378"/>
        <dbReference type="ChEBI" id="CHEBI:29105"/>
    </reaction>
    <physiologicalReaction direction="left-to-right" evidence="1">
        <dbReference type="Rhea" id="RHEA:71196"/>
    </physiologicalReaction>
</comment>
<comment type="subcellular location">
    <subcellularLocation>
        <location evidence="1">Cell inner membrane</location>
        <topology evidence="1">Multi-pass membrane protein</topology>
    </subcellularLocation>
</comment>
<comment type="similarity">
    <text evidence="1">Belongs to the CorA metal ion transporter (MIT) (TC 1.A.35) family.</text>
</comment>
<name>ZNTB_ECO55</name>
<evidence type="ECO:0000255" key="1">
    <source>
        <dbReference type="HAMAP-Rule" id="MF_01565"/>
    </source>
</evidence>
<proteinExistence type="inferred from homology"/>
<protein>
    <recommendedName>
        <fullName evidence="1">Zinc transport protein ZntB</fullName>
    </recommendedName>
</protein>
<gene>
    <name evidence="1" type="primary">zntB</name>
    <name type="ordered locus">EC55989_1507</name>
</gene>
<reference key="1">
    <citation type="journal article" date="2009" name="PLoS Genet.">
        <title>Organised genome dynamics in the Escherichia coli species results in highly diverse adaptive paths.</title>
        <authorList>
            <person name="Touchon M."/>
            <person name="Hoede C."/>
            <person name="Tenaillon O."/>
            <person name="Barbe V."/>
            <person name="Baeriswyl S."/>
            <person name="Bidet P."/>
            <person name="Bingen E."/>
            <person name="Bonacorsi S."/>
            <person name="Bouchier C."/>
            <person name="Bouvet O."/>
            <person name="Calteau A."/>
            <person name="Chiapello H."/>
            <person name="Clermont O."/>
            <person name="Cruveiller S."/>
            <person name="Danchin A."/>
            <person name="Diard M."/>
            <person name="Dossat C."/>
            <person name="Karoui M.E."/>
            <person name="Frapy E."/>
            <person name="Garry L."/>
            <person name="Ghigo J.M."/>
            <person name="Gilles A.M."/>
            <person name="Johnson J."/>
            <person name="Le Bouguenec C."/>
            <person name="Lescat M."/>
            <person name="Mangenot S."/>
            <person name="Martinez-Jehanne V."/>
            <person name="Matic I."/>
            <person name="Nassif X."/>
            <person name="Oztas S."/>
            <person name="Petit M.A."/>
            <person name="Pichon C."/>
            <person name="Rouy Z."/>
            <person name="Ruf C.S."/>
            <person name="Schneider D."/>
            <person name="Tourret J."/>
            <person name="Vacherie B."/>
            <person name="Vallenet D."/>
            <person name="Medigue C."/>
            <person name="Rocha E.P.C."/>
            <person name="Denamur E."/>
        </authorList>
    </citation>
    <scope>NUCLEOTIDE SEQUENCE [LARGE SCALE GENOMIC DNA]</scope>
    <source>
        <strain>55989 / EAEC</strain>
    </source>
</reference>
<organism>
    <name type="scientific">Escherichia coli (strain 55989 / EAEC)</name>
    <dbReference type="NCBI Taxonomy" id="585055"/>
    <lineage>
        <taxon>Bacteria</taxon>
        <taxon>Pseudomonadati</taxon>
        <taxon>Pseudomonadota</taxon>
        <taxon>Gammaproteobacteria</taxon>
        <taxon>Enterobacterales</taxon>
        <taxon>Enterobacteriaceae</taxon>
        <taxon>Escherichia</taxon>
    </lineage>
</organism>
<accession>B7L5A9</accession>
<sequence length="327" mass="36612">MEAIKGSDVNVPDAVFAWMLDGRGGVKPLENTDVIDEAHPCWLHLNYVHHDSAQWLATTPLLPNNVRDALAGESTRPRVSRLGEGTLITLRCINGSTDERPDQLVAMRVYMDGRLIVSTRQRKVLALDDVVSDLEEGTGPTDCGGWLVDVCDALTDHSSEFIEQLHDKIIDLEDNLLDQQIPPRGFLALLRKQLIVMRRYMAPQRDVYARLASERLPWMSDDQRRRMQDIADRLGRGLDEIDACIARTGVMADEIAQVMQENLARRTYTMSLMAMVFLPSTFLTGLFGVNLGGIPGGGWQFGFSIFCILLVVLIGGVALWLHRSKWL</sequence>
<feature type="chain" id="PRO_1000185452" description="Zinc transport protein ZntB">
    <location>
        <begin position="1"/>
        <end position="327"/>
    </location>
</feature>
<feature type="topological domain" description="Cytoplasmic" evidence="1">
    <location>
        <begin position="1"/>
        <end position="273"/>
    </location>
</feature>
<feature type="transmembrane region" description="Helical" evidence="1">
    <location>
        <begin position="274"/>
        <end position="294"/>
    </location>
</feature>
<feature type="topological domain" description="Periplasmic" evidence="1">
    <location>
        <begin position="295"/>
        <end position="300"/>
    </location>
</feature>
<feature type="transmembrane region" description="Helical" evidence="1">
    <location>
        <begin position="301"/>
        <end position="321"/>
    </location>
</feature>
<feature type="topological domain" description="Cytoplasmic" evidence="1">
    <location>
        <begin position="322"/>
        <end position="327"/>
    </location>
</feature>
<dbReference type="EMBL" id="CU928145">
    <property type="protein sequence ID" value="CAU97364.1"/>
    <property type="molecule type" value="Genomic_DNA"/>
</dbReference>
<dbReference type="RefSeq" id="WP_000387388.1">
    <property type="nucleotide sequence ID" value="NZ_CP028304.1"/>
</dbReference>
<dbReference type="SMR" id="B7L5A9"/>
<dbReference type="GeneID" id="93775479"/>
<dbReference type="KEGG" id="eck:EC55989_1507"/>
<dbReference type="HOGENOM" id="CLU_007127_2_0_6"/>
<dbReference type="Proteomes" id="UP000000746">
    <property type="component" value="Chromosome"/>
</dbReference>
<dbReference type="GO" id="GO:0005886">
    <property type="term" value="C:plasma membrane"/>
    <property type="evidence" value="ECO:0007669"/>
    <property type="project" value="UniProtKB-SubCell"/>
</dbReference>
<dbReference type="GO" id="GO:0050897">
    <property type="term" value="F:cobalt ion binding"/>
    <property type="evidence" value="ECO:0007669"/>
    <property type="project" value="TreeGrafter"/>
</dbReference>
<dbReference type="GO" id="GO:0015087">
    <property type="term" value="F:cobalt ion transmembrane transporter activity"/>
    <property type="evidence" value="ECO:0007669"/>
    <property type="project" value="TreeGrafter"/>
</dbReference>
<dbReference type="GO" id="GO:0000287">
    <property type="term" value="F:magnesium ion binding"/>
    <property type="evidence" value="ECO:0007669"/>
    <property type="project" value="TreeGrafter"/>
</dbReference>
<dbReference type="GO" id="GO:0015095">
    <property type="term" value="F:magnesium ion transmembrane transporter activity"/>
    <property type="evidence" value="ECO:0007669"/>
    <property type="project" value="TreeGrafter"/>
</dbReference>
<dbReference type="GO" id="GO:0005385">
    <property type="term" value="F:zinc ion transmembrane transporter activity"/>
    <property type="evidence" value="ECO:0007669"/>
    <property type="project" value="UniProtKB-UniRule"/>
</dbReference>
<dbReference type="CDD" id="cd12833">
    <property type="entry name" value="ZntB-like_1"/>
    <property type="match status" value="1"/>
</dbReference>
<dbReference type="FunFam" id="1.20.58.340:FF:000002">
    <property type="entry name" value="Zinc transport protein ZntB"/>
    <property type="match status" value="1"/>
</dbReference>
<dbReference type="FunFam" id="1.20.58.340:FF:000003">
    <property type="entry name" value="Zinc transport protein ZntB"/>
    <property type="match status" value="1"/>
</dbReference>
<dbReference type="FunFam" id="3.30.460.20:FF:000001">
    <property type="entry name" value="Zinc transport protein ZntB"/>
    <property type="match status" value="1"/>
</dbReference>
<dbReference type="Gene3D" id="3.30.460.20">
    <property type="entry name" value="CorA soluble domain-like"/>
    <property type="match status" value="1"/>
</dbReference>
<dbReference type="Gene3D" id="1.20.58.340">
    <property type="entry name" value="Magnesium transport protein CorA, transmembrane region"/>
    <property type="match status" value="2"/>
</dbReference>
<dbReference type="HAMAP" id="MF_01565">
    <property type="entry name" value="ZntB"/>
    <property type="match status" value="1"/>
</dbReference>
<dbReference type="InterPro" id="IPR045861">
    <property type="entry name" value="CorA_cytoplasmic_dom"/>
</dbReference>
<dbReference type="InterPro" id="IPR045863">
    <property type="entry name" value="CorA_TM1_TM2"/>
</dbReference>
<dbReference type="InterPro" id="IPR002523">
    <property type="entry name" value="MgTranspt_CorA/ZnTranspt_ZntB"/>
</dbReference>
<dbReference type="InterPro" id="IPR023714">
    <property type="entry name" value="Zn_transp_ZntB"/>
</dbReference>
<dbReference type="NCBIfam" id="NF007092">
    <property type="entry name" value="PRK09546.1"/>
    <property type="match status" value="1"/>
</dbReference>
<dbReference type="PANTHER" id="PTHR46494">
    <property type="entry name" value="CORA FAMILY METAL ION TRANSPORTER (EUROFUNG)"/>
    <property type="match status" value="1"/>
</dbReference>
<dbReference type="PANTHER" id="PTHR46494:SF3">
    <property type="entry name" value="ZINC TRANSPORT PROTEIN ZNTB"/>
    <property type="match status" value="1"/>
</dbReference>
<dbReference type="Pfam" id="PF01544">
    <property type="entry name" value="CorA"/>
    <property type="match status" value="1"/>
</dbReference>
<dbReference type="SUPFAM" id="SSF143865">
    <property type="entry name" value="CorA soluble domain-like"/>
    <property type="match status" value="1"/>
</dbReference>
<dbReference type="SUPFAM" id="SSF144083">
    <property type="entry name" value="Magnesium transport protein CorA, transmembrane region"/>
    <property type="match status" value="1"/>
</dbReference>
<keyword id="KW-0997">Cell inner membrane</keyword>
<keyword id="KW-1003">Cell membrane</keyword>
<keyword id="KW-0406">Ion transport</keyword>
<keyword id="KW-0472">Membrane</keyword>
<keyword id="KW-1185">Reference proteome</keyword>
<keyword id="KW-0812">Transmembrane</keyword>
<keyword id="KW-1133">Transmembrane helix</keyword>
<keyword id="KW-0813">Transport</keyword>
<keyword id="KW-0862">Zinc</keyword>